<proteinExistence type="inferred from homology"/>
<organism>
    <name type="scientific">Xanthomonas euvesicatoria pv. vesicatoria (strain 85-10)</name>
    <name type="common">Xanthomonas campestris pv. vesicatoria</name>
    <dbReference type="NCBI Taxonomy" id="316273"/>
    <lineage>
        <taxon>Bacteria</taxon>
        <taxon>Pseudomonadati</taxon>
        <taxon>Pseudomonadota</taxon>
        <taxon>Gammaproteobacteria</taxon>
        <taxon>Lysobacterales</taxon>
        <taxon>Lysobacteraceae</taxon>
        <taxon>Xanthomonas</taxon>
    </lineage>
</organism>
<sequence length="346" mass="37946">MTEQRIIASSSTREDDAADASIRPKRLADYLGQQPVREQMEIYIQAAKARGEAMDHVLIFGPPGLGKTTLSHVIANELGVSLRVTSGPVIEKAGDLAALLTNLQPHDVLFIDEIHRLSPVVEEVLYPAMEDFQIDIMIGDGPAARSIKIDLPPFTLIGATTRAGLLTAPLRDRFGIVQRLEFYSPQELTRIVSRSAAILGIDCTPEGAAEIARRARGTPRIANRLLRRVRDYAQVKAAGHIDLPVAQAAMQMLKVDPEGFDELDRRMLRTIVEHFDGGPVGVESLAASLSEERGTLEDVIEPYLIQQGFLIRTARGRMVTPKAYLHLGLKVPRERAPGIGEPGDLF</sequence>
<reference key="1">
    <citation type="journal article" date="2005" name="J. Bacteriol.">
        <title>Insights into genome plasticity and pathogenicity of the plant pathogenic Bacterium Xanthomonas campestris pv. vesicatoria revealed by the complete genome sequence.</title>
        <authorList>
            <person name="Thieme F."/>
            <person name="Koebnik R."/>
            <person name="Bekel T."/>
            <person name="Berger C."/>
            <person name="Boch J."/>
            <person name="Buettner D."/>
            <person name="Caldana C."/>
            <person name="Gaigalat L."/>
            <person name="Goesmann A."/>
            <person name="Kay S."/>
            <person name="Kirchner O."/>
            <person name="Lanz C."/>
            <person name="Linke B."/>
            <person name="McHardy A.C."/>
            <person name="Meyer F."/>
            <person name="Mittenhuber G."/>
            <person name="Nies D.H."/>
            <person name="Niesbach-Kloesgen U."/>
            <person name="Patschkowski T."/>
            <person name="Rueckert C."/>
            <person name="Rupp O."/>
            <person name="Schneiker S."/>
            <person name="Schuster S.C."/>
            <person name="Vorhoelter F.J."/>
            <person name="Weber E."/>
            <person name="Puehler A."/>
            <person name="Bonas U."/>
            <person name="Bartels D."/>
            <person name="Kaiser O."/>
        </authorList>
    </citation>
    <scope>NUCLEOTIDE SEQUENCE [LARGE SCALE GENOMIC DNA]</scope>
    <source>
        <strain>85-10</strain>
    </source>
</reference>
<gene>
    <name evidence="1" type="primary">ruvB</name>
    <name type="ordered locus">XCV3277</name>
</gene>
<comment type="function">
    <text evidence="1">The RuvA-RuvB-RuvC complex processes Holliday junction (HJ) DNA during genetic recombination and DNA repair, while the RuvA-RuvB complex plays an important role in the rescue of blocked DNA replication forks via replication fork reversal (RFR). RuvA specifically binds to HJ cruciform DNA, conferring on it an open structure. The RuvB hexamer acts as an ATP-dependent pump, pulling dsDNA into and through the RuvAB complex. RuvB forms 2 homohexamers on either side of HJ DNA bound by 1 or 2 RuvA tetramers; 4 subunits per hexamer contact DNA at a time. Coordinated motions by a converter formed by DNA-disengaged RuvB subunits stimulates ATP hydrolysis and nucleotide exchange. Immobilization of the converter enables RuvB to convert the ATP-contained energy into a lever motion, pulling 2 nucleotides of DNA out of the RuvA tetramer per ATP hydrolyzed, thus driving DNA branch migration. The RuvB motors rotate together with the DNA substrate, which together with the progressing nucleotide cycle form the mechanistic basis for DNA recombination by continuous HJ branch migration. Branch migration allows RuvC to scan DNA until it finds its consensus sequence, where it cleaves and resolves cruciform DNA.</text>
</comment>
<comment type="catalytic activity">
    <reaction evidence="1">
        <text>ATP + H2O = ADP + phosphate + H(+)</text>
        <dbReference type="Rhea" id="RHEA:13065"/>
        <dbReference type="ChEBI" id="CHEBI:15377"/>
        <dbReference type="ChEBI" id="CHEBI:15378"/>
        <dbReference type="ChEBI" id="CHEBI:30616"/>
        <dbReference type="ChEBI" id="CHEBI:43474"/>
        <dbReference type="ChEBI" id="CHEBI:456216"/>
    </reaction>
</comment>
<comment type="subunit">
    <text evidence="1">Homohexamer. Forms an RuvA(8)-RuvB(12)-Holliday junction (HJ) complex. HJ DNA is sandwiched between 2 RuvA tetramers; dsDNA enters through RuvA and exits via RuvB. An RuvB hexamer assembles on each DNA strand where it exits the tetramer. Each RuvB hexamer is contacted by two RuvA subunits (via domain III) on 2 adjacent RuvB subunits; this complex drives branch migration. In the full resolvosome a probable DNA-RuvA(4)-RuvB(12)-RuvC(2) complex forms which resolves the HJ.</text>
</comment>
<comment type="subcellular location">
    <subcellularLocation>
        <location evidence="1">Cytoplasm</location>
    </subcellularLocation>
</comment>
<comment type="domain">
    <text evidence="1">Has 3 domains, the large (RuvB-L) and small ATPase (RuvB-S) domains and the C-terminal head (RuvB-H) domain. The head domain binds DNA, while the ATPase domains jointly bind ATP, ADP or are empty depending on the state of the subunit in the translocation cycle. During a single DNA translocation step the structure of each domain remains the same, but their relative positions change.</text>
</comment>
<comment type="similarity">
    <text evidence="1">Belongs to the RuvB family.</text>
</comment>
<evidence type="ECO:0000255" key="1">
    <source>
        <dbReference type="HAMAP-Rule" id="MF_00016"/>
    </source>
</evidence>
<name>RUVB_XANE5</name>
<keyword id="KW-0067">ATP-binding</keyword>
<keyword id="KW-0963">Cytoplasm</keyword>
<keyword id="KW-0227">DNA damage</keyword>
<keyword id="KW-0233">DNA recombination</keyword>
<keyword id="KW-0234">DNA repair</keyword>
<keyword id="KW-0238">DNA-binding</keyword>
<keyword id="KW-0378">Hydrolase</keyword>
<keyword id="KW-0547">Nucleotide-binding</keyword>
<dbReference type="EC" id="3.6.4.-" evidence="1"/>
<dbReference type="EMBL" id="AM039952">
    <property type="protein sequence ID" value="CAJ25008.1"/>
    <property type="molecule type" value="Genomic_DNA"/>
</dbReference>
<dbReference type="RefSeq" id="WP_011348273.1">
    <property type="nucleotide sequence ID" value="NZ_CP017190.1"/>
</dbReference>
<dbReference type="SMR" id="Q3BQF5"/>
<dbReference type="STRING" id="456327.BJD11_06380"/>
<dbReference type="KEGG" id="xcv:XCV3277"/>
<dbReference type="eggNOG" id="COG2255">
    <property type="taxonomic scope" value="Bacteria"/>
</dbReference>
<dbReference type="HOGENOM" id="CLU_055599_1_0_6"/>
<dbReference type="Proteomes" id="UP000007069">
    <property type="component" value="Chromosome"/>
</dbReference>
<dbReference type="GO" id="GO:0005737">
    <property type="term" value="C:cytoplasm"/>
    <property type="evidence" value="ECO:0007669"/>
    <property type="project" value="UniProtKB-SubCell"/>
</dbReference>
<dbReference type="GO" id="GO:0048476">
    <property type="term" value="C:Holliday junction resolvase complex"/>
    <property type="evidence" value="ECO:0007669"/>
    <property type="project" value="UniProtKB-UniRule"/>
</dbReference>
<dbReference type="GO" id="GO:0005524">
    <property type="term" value="F:ATP binding"/>
    <property type="evidence" value="ECO:0007669"/>
    <property type="project" value="UniProtKB-UniRule"/>
</dbReference>
<dbReference type="GO" id="GO:0016887">
    <property type="term" value="F:ATP hydrolysis activity"/>
    <property type="evidence" value="ECO:0007669"/>
    <property type="project" value="InterPro"/>
</dbReference>
<dbReference type="GO" id="GO:0000400">
    <property type="term" value="F:four-way junction DNA binding"/>
    <property type="evidence" value="ECO:0007669"/>
    <property type="project" value="UniProtKB-UniRule"/>
</dbReference>
<dbReference type="GO" id="GO:0009378">
    <property type="term" value="F:four-way junction helicase activity"/>
    <property type="evidence" value="ECO:0007669"/>
    <property type="project" value="InterPro"/>
</dbReference>
<dbReference type="GO" id="GO:0006310">
    <property type="term" value="P:DNA recombination"/>
    <property type="evidence" value="ECO:0007669"/>
    <property type="project" value="UniProtKB-UniRule"/>
</dbReference>
<dbReference type="GO" id="GO:0006281">
    <property type="term" value="P:DNA repair"/>
    <property type="evidence" value="ECO:0007669"/>
    <property type="project" value="UniProtKB-UniRule"/>
</dbReference>
<dbReference type="CDD" id="cd00009">
    <property type="entry name" value="AAA"/>
    <property type="match status" value="1"/>
</dbReference>
<dbReference type="FunFam" id="3.40.50.300:FF:000073">
    <property type="entry name" value="Holliday junction ATP-dependent DNA helicase RuvB"/>
    <property type="match status" value="1"/>
</dbReference>
<dbReference type="Gene3D" id="1.10.8.60">
    <property type="match status" value="1"/>
</dbReference>
<dbReference type="Gene3D" id="3.40.50.300">
    <property type="entry name" value="P-loop containing nucleotide triphosphate hydrolases"/>
    <property type="match status" value="1"/>
</dbReference>
<dbReference type="Gene3D" id="1.10.10.10">
    <property type="entry name" value="Winged helix-like DNA-binding domain superfamily/Winged helix DNA-binding domain"/>
    <property type="match status" value="1"/>
</dbReference>
<dbReference type="HAMAP" id="MF_00016">
    <property type="entry name" value="DNA_HJ_migration_RuvB"/>
    <property type="match status" value="1"/>
</dbReference>
<dbReference type="InterPro" id="IPR003593">
    <property type="entry name" value="AAA+_ATPase"/>
</dbReference>
<dbReference type="InterPro" id="IPR041445">
    <property type="entry name" value="AAA_lid_4"/>
</dbReference>
<dbReference type="InterPro" id="IPR004605">
    <property type="entry name" value="DNA_helicase_Holl-junc_RuvB"/>
</dbReference>
<dbReference type="InterPro" id="IPR027417">
    <property type="entry name" value="P-loop_NTPase"/>
</dbReference>
<dbReference type="InterPro" id="IPR008824">
    <property type="entry name" value="RuvB-like_N"/>
</dbReference>
<dbReference type="InterPro" id="IPR008823">
    <property type="entry name" value="RuvB_C"/>
</dbReference>
<dbReference type="InterPro" id="IPR036388">
    <property type="entry name" value="WH-like_DNA-bd_sf"/>
</dbReference>
<dbReference type="InterPro" id="IPR036390">
    <property type="entry name" value="WH_DNA-bd_sf"/>
</dbReference>
<dbReference type="NCBIfam" id="NF000868">
    <property type="entry name" value="PRK00080.1"/>
    <property type="match status" value="1"/>
</dbReference>
<dbReference type="NCBIfam" id="TIGR00635">
    <property type="entry name" value="ruvB"/>
    <property type="match status" value="1"/>
</dbReference>
<dbReference type="PANTHER" id="PTHR42848">
    <property type="match status" value="1"/>
</dbReference>
<dbReference type="PANTHER" id="PTHR42848:SF1">
    <property type="entry name" value="HOLLIDAY JUNCTION BRANCH MIGRATION COMPLEX SUBUNIT RUVB"/>
    <property type="match status" value="1"/>
</dbReference>
<dbReference type="Pfam" id="PF17864">
    <property type="entry name" value="AAA_lid_4"/>
    <property type="match status" value="1"/>
</dbReference>
<dbReference type="Pfam" id="PF05491">
    <property type="entry name" value="RuvB_C"/>
    <property type="match status" value="1"/>
</dbReference>
<dbReference type="Pfam" id="PF05496">
    <property type="entry name" value="RuvB_N"/>
    <property type="match status" value="1"/>
</dbReference>
<dbReference type="SMART" id="SM00382">
    <property type="entry name" value="AAA"/>
    <property type="match status" value="1"/>
</dbReference>
<dbReference type="SUPFAM" id="SSF52540">
    <property type="entry name" value="P-loop containing nucleoside triphosphate hydrolases"/>
    <property type="match status" value="1"/>
</dbReference>
<dbReference type="SUPFAM" id="SSF46785">
    <property type="entry name" value="Winged helix' DNA-binding domain"/>
    <property type="match status" value="1"/>
</dbReference>
<feature type="chain" id="PRO_0000235430" description="Holliday junction branch migration complex subunit RuvB">
    <location>
        <begin position="1"/>
        <end position="346"/>
    </location>
</feature>
<feature type="region of interest" description="Large ATPase domain (RuvB-L)" evidence="1">
    <location>
        <begin position="1"/>
        <end position="183"/>
    </location>
</feature>
<feature type="region of interest" description="Small ATPAse domain (RuvB-S)" evidence="1">
    <location>
        <begin position="184"/>
        <end position="254"/>
    </location>
</feature>
<feature type="region of interest" description="Head domain (RuvB-H)" evidence="1">
    <location>
        <begin position="257"/>
        <end position="346"/>
    </location>
</feature>
<feature type="binding site" evidence="1">
    <location>
        <position position="22"/>
    </location>
    <ligand>
        <name>ATP</name>
        <dbReference type="ChEBI" id="CHEBI:30616"/>
    </ligand>
</feature>
<feature type="binding site" evidence="1">
    <location>
        <position position="23"/>
    </location>
    <ligand>
        <name>ATP</name>
        <dbReference type="ChEBI" id="CHEBI:30616"/>
    </ligand>
</feature>
<feature type="binding site" evidence="1">
    <location>
        <position position="64"/>
    </location>
    <ligand>
        <name>ATP</name>
        <dbReference type="ChEBI" id="CHEBI:30616"/>
    </ligand>
</feature>
<feature type="binding site" evidence="1">
    <location>
        <position position="67"/>
    </location>
    <ligand>
        <name>ATP</name>
        <dbReference type="ChEBI" id="CHEBI:30616"/>
    </ligand>
</feature>
<feature type="binding site" evidence="1">
    <location>
        <position position="68"/>
    </location>
    <ligand>
        <name>ATP</name>
        <dbReference type="ChEBI" id="CHEBI:30616"/>
    </ligand>
</feature>
<feature type="binding site" evidence="1">
    <location>
        <position position="68"/>
    </location>
    <ligand>
        <name>Mg(2+)</name>
        <dbReference type="ChEBI" id="CHEBI:18420"/>
    </ligand>
</feature>
<feature type="binding site" evidence="1">
    <location>
        <position position="69"/>
    </location>
    <ligand>
        <name>ATP</name>
        <dbReference type="ChEBI" id="CHEBI:30616"/>
    </ligand>
</feature>
<feature type="binding site" evidence="1">
    <location>
        <begin position="130"/>
        <end position="132"/>
    </location>
    <ligand>
        <name>ATP</name>
        <dbReference type="ChEBI" id="CHEBI:30616"/>
    </ligand>
</feature>
<feature type="binding site" evidence="1">
    <location>
        <position position="173"/>
    </location>
    <ligand>
        <name>ATP</name>
        <dbReference type="ChEBI" id="CHEBI:30616"/>
    </ligand>
</feature>
<feature type="binding site" evidence="1">
    <location>
        <position position="183"/>
    </location>
    <ligand>
        <name>ATP</name>
        <dbReference type="ChEBI" id="CHEBI:30616"/>
    </ligand>
</feature>
<feature type="binding site" evidence="1">
    <location>
        <position position="220"/>
    </location>
    <ligand>
        <name>ATP</name>
        <dbReference type="ChEBI" id="CHEBI:30616"/>
    </ligand>
</feature>
<feature type="binding site" evidence="1">
    <location>
        <position position="293"/>
    </location>
    <ligand>
        <name>DNA</name>
        <dbReference type="ChEBI" id="CHEBI:16991"/>
    </ligand>
</feature>
<feature type="binding site" evidence="1">
    <location>
        <position position="312"/>
    </location>
    <ligand>
        <name>DNA</name>
        <dbReference type="ChEBI" id="CHEBI:16991"/>
    </ligand>
</feature>
<feature type="binding site" evidence="1">
    <location>
        <position position="317"/>
    </location>
    <ligand>
        <name>DNA</name>
        <dbReference type="ChEBI" id="CHEBI:16991"/>
    </ligand>
</feature>
<accession>Q3BQF5</accession>
<protein>
    <recommendedName>
        <fullName evidence="1">Holliday junction branch migration complex subunit RuvB</fullName>
        <ecNumber evidence="1">3.6.4.-</ecNumber>
    </recommendedName>
</protein>